<dbReference type="EC" id="1.6.2.2"/>
<dbReference type="EMBL" id="AAHF01000007">
    <property type="protein sequence ID" value="EAL88164.1"/>
    <property type="molecule type" value="Genomic_DNA"/>
</dbReference>
<dbReference type="RefSeq" id="XP_750202.1">
    <property type="nucleotide sequence ID" value="XM_745109.1"/>
</dbReference>
<dbReference type="SMR" id="Q4WJW8"/>
<dbReference type="FunCoup" id="Q4WJW8">
    <property type="interactions" value="316"/>
</dbReference>
<dbReference type="STRING" id="330879.Q4WJW8"/>
<dbReference type="SwissPalm" id="Q4WJW8"/>
<dbReference type="EnsemblFungi" id="EAL88164">
    <property type="protein sequence ID" value="EAL88164"/>
    <property type="gene ID" value="AFUA_1G04540"/>
</dbReference>
<dbReference type="GeneID" id="3507287"/>
<dbReference type="KEGG" id="afm:AFUA_1G04540"/>
<dbReference type="VEuPathDB" id="FungiDB:Afu1g04540"/>
<dbReference type="eggNOG" id="KOG0534">
    <property type="taxonomic scope" value="Eukaryota"/>
</dbReference>
<dbReference type="HOGENOM" id="CLU_003827_9_1_1"/>
<dbReference type="InParanoid" id="Q4WJW8"/>
<dbReference type="OMA" id="KGPEMQK"/>
<dbReference type="OrthoDB" id="432685at2759"/>
<dbReference type="Proteomes" id="UP000002530">
    <property type="component" value="Chromosome 1"/>
</dbReference>
<dbReference type="GO" id="GO:0005741">
    <property type="term" value="C:mitochondrial outer membrane"/>
    <property type="evidence" value="ECO:0007669"/>
    <property type="project" value="UniProtKB-SubCell"/>
</dbReference>
<dbReference type="GO" id="GO:0004128">
    <property type="term" value="F:cytochrome-b5 reductase activity, acting on NAD(P)H"/>
    <property type="evidence" value="ECO:0000318"/>
    <property type="project" value="GO_Central"/>
</dbReference>
<dbReference type="GO" id="GO:0006696">
    <property type="term" value="P:ergosterol biosynthetic process"/>
    <property type="evidence" value="ECO:0000318"/>
    <property type="project" value="GO_Central"/>
</dbReference>
<dbReference type="CDD" id="cd06183">
    <property type="entry name" value="cyt_b5_reduct_like"/>
    <property type="match status" value="1"/>
</dbReference>
<dbReference type="FunFam" id="2.40.30.10:FF:000032">
    <property type="entry name" value="NADH-cytochrome b5 reductase"/>
    <property type="match status" value="1"/>
</dbReference>
<dbReference type="FunFam" id="3.40.50.80:FF:000009">
    <property type="entry name" value="NADH-cytochrome b5 reductase"/>
    <property type="match status" value="1"/>
</dbReference>
<dbReference type="Gene3D" id="3.40.50.80">
    <property type="entry name" value="Nucleotide-binding domain of ferredoxin-NADP reductase (FNR) module"/>
    <property type="match status" value="1"/>
</dbReference>
<dbReference type="Gene3D" id="2.40.30.10">
    <property type="entry name" value="Translation factors"/>
    <property type="match status" value="1"/>
</dbReference>
<dbReference type="InterPro" id="IPR001834">
    <property type="entry name" value="CBR-like"/>
</dbReference>
<dbReference type="InterPro" id="IPR008333">
    <property type="entry name" value="Cbr1-like_FAD-bd_dom"/>
</dbReference>
<dbReference type="InterPro" id="IPR017927">
    <property type="entry name" value="FAD-bd_FR_type"/>
</dbReference>
<dbReference type="InterPro" id="IPR001709">
    <property type="entry name" value="Flavoprot_Pyr_Nucl_cyt_Rdtase"/>
</dbReference>
<dbReference type="InterPro" id="IPR039261">
    <property type="entry name" value="FNR_nucleotide-bd"/>
</dbReference>
<dbReference type="InterPro" id="IPR001433">
    <property type="entry name" value="OxRdtase_FAD/NAD-bd"/>
</dbReference>
<dbReference type="InterPro" id="IPR017938">
    <property type="entry name" value="Riboflavin_synthase-like_b-brl"/>
</dbReference>
<dbReference type="PANTHER" id="PTHR19370">
    <property type="entry name" value="NADH-CYTOCHROME B5 REDUCTASE"/>
    <property type="match status" value="1"/>
</dbReference>
<dbReference type="PANTHER" id="PTHR19370:SF171">
    <property type="entry name" value="NADH-CYTOCHROME B5 REDUCTASE 2"/>
    <property type="match status" value="1"/>
</dbReference>
<dbReference type="Pfam" id="PF00970">
    <property type="entry name" value="FAD_binding_6"/>
    <property type="match status" value="1"/>
</dbReference>
<dbReference type="Pfam" id="PF00175">
    <property type="entry name" value="NAD_binding_1"/>
    <property type="match status" value="1"/>
</dbReference>
<dbReference type="PRINTS" id="PR00371">
    <property type="entry name" value="FPNCR"/>
</dbReference>
<dbReference type="SUPFAM" id="SSF52343">
    <property type="entry name" value="Ferredoxin reductase-like, C-terminal NADP-linked domain"/>
    <property type="match status" value="1"/>
</dbReference>
<dbReference type="SUPFAM" id="SSF63380">
    <property type="entry name" value="Riboflavin synthase domain-like"/>
    <property type="match status" value="1"/>
</dbReference>
<dbReference type="PROSITE" id="PS51384">
    <property type="entry name" value="FAD_FR"/>
    <property type="match status" value="1"/>
</dbReference>
<reference key="1">
    <citation type="journal article" date="2005" name="Nature">
        <title>Genomic sequence of the pathogenic and allergenic filamentous fungus Aspergillus fumigatus.</title>
        <authorList>
            <person name="Nierman W.C."/>
            <person name="Pain A."/>
            <person name="Anderson M.J."/>
            <person name="Wortman J.R."/>
            <person name="Kim H.S."/>
            <person name="Arroyo J."/>
            <person name="Berriman M."/>
            <person name="Abe K."/>
            <person name="Archer D.B."/>
            <person name="Bermejo C."/>
            <person name="Bennett J.W."/>
            <person name="Bowyer P."/>
            <person name="Chen D."/>
            <person name="Collins M."/>
            <person name="Coulsen R."/>
            <person name="Davies R."/>
            <person name="Dyer P.S."/>
            <person name="Farman M.L."/>
            <person name="Fedorova N."/>
            <person name="Fedorova N.D."/>
            <person name="Feldblyum T.V."/>
            <person name="Fischer R."/>
            <person name="Fosker N."/>
            <person name="Fraser A."/>
            <person name="Garcia J.L."/>
            <person name="Garcia M.J."/>
            <person name="Goble A."/>
            <person name="Goldman G.H."/>
            <person name="Gomi K."/>
            <person name="Griffith-Jones S."/>
            <person name="Gwilliam R."/>
            <person name="Haas B.J."/>
            <person name="Haas H."/>
            <person name="Harris D.E."/>
            <person name="Horiuchi H."/>
            <person name="Huang J."/>
            <person name="Humphray S."/>
            <person name="Jimenez J."/>
            <person name="Keller N."/>
            <person name="Khouri H."/>
            <person name="Kitamoto K."/>
            <person name="Kobayashi T."/>
            <person name="Konzack S."/>
            <person name="Kulkarni R."/>
            <person name="Kumagai T."/>
            <person name="Lafton A."/>
            <person name="Latge J.-P."/>
            <person name="Li W."/>
            <person name="Lord A."/>
            <person name="Lu C."/>
            <person name="Majoros W.H."/>
            <person name="May G.S."/>
            <person name="Miller B.L."/>
            <person name="Mohamoud Y."/>
            <person name="Molina M."/>
            <person name="Monod M."/>
            <person name="Mouyna I."/>
            <person name="Mulligan S."/>
            <person name="Murphy L.D."/>
            <person name="O'Neil S."/>
            <person name="Paulsen I."/>
            <person name="Penalva M.A."/>
            <person name="Pertea M."/>
            <person name="Price C."/>
            <person name="Pritchard B.L."/>
            <person name="Quail M.A."/>
            <person name="Rabbinowitsch E."/>
            <person name="Rawlins N."/>
            <person name="Rajandream M.A."/>
            <person name="Reichard U."/>
            <person name="Renauld H."/>
            <person name="Robson G.D."/>
            <person name="Rodriguez de Cordoba S."/>
            <person name="Rodriguez-Pena J.M."/>
            <person name="Ronning C.M."/>
            <person name="Rutter S."/>
            <person name="Salzberg S.L."/>
            <person name="Sanchez M."/>
            <person name="Sanchez-Ferrero J.C."/>
            <person name="Saunders D."/>
            <person name="Seeger K."/>
            <person name="Squares R."/>
            <person name="Squares S."/>
            <person name="Takeuchi M."/>
            <person name="Tekaia F."/>
            <person name="Turner G."/>
            <person name="Vazquez de Aldana C.R."/>
            <person name="Weidman J."/>
            <person name="White O."/>
            <person name="Woodward J.R."/>
            <person name="Yu J.-H."/>
            <person name="Fraser C.M."/>
            <person name="Galagan J.E."/>
            <person name="Asai K."/>
            <person name="Machida M."/>
            <person name="Hall N."/>
            <person name="Barrell B.G."/>
            <person name="Denning D.W."/>
        </authorList>
    </citation>
    <scope>NUCLEOTIDE SEQUENCE [LARGE SCALE GENOMIC DNA]</scope>
    <source>
        <strain>ATCC MYA-4609 / CBS 101355 / FGSC A1100 / Af293</strain>
    </source>
</reference>
<name>MCR1_ASPFU</name>
<keyword id="KW-0274">FAD</keyword>
<keyword id="KW-0285">Flavoprotein</keyword>
<keyword id="KW-0472">Membrane</keyword>
<keyword id="KW-0496">Mitochondrion</keyword>
<keyword id="KW-1000">Mitochondrion outer membrane</keyword>
<keyword id="KW-0520">NAD</keyword>
<keyword id="KW-0560">Oxidoreductase</keyword>
<keyword id="KW-1185">Reference proteome</keyword>
<keyword id="KW-0812">Transmembrane</keyword>
<keyword id="KW-1133">Transmembrane helix</keyword>
<sequence>MFARQSLRVAQPLKQGFRKYSTEAPSKGKSSLAPIYLGVGLIGLGVGLYRYNSASAEAPPAERPKVFTGGDQGWVDLKLAQIENLSPNTKRLRFEFPDKEAVSGLHVASALLTKFKPQGAEKPVIRPYTPVSDEEQPGYLDLVVKVYPNGPMSEHLHSMNVDQRLEFKGPIPKYPWEANKHKHICLIAGGTGITPMYQLARKIFKDPEDQTKVTLVFGNVREEDILLKKELEELENTYPRRFRAFYLLDHPPKEWTGGKGYITKELLKTVLPEPKEENIKIFVCGPPGMYKSISGPKVSPTDQGELTGILAELGYSKDQVFKF</sequence>
<evidence type="ECO:0000250" key="1"/>
<evidence type="ECO:0000255" key="2"/>
<evidence type="ECO:0000255" key="3">
    <source>
        <dbReference type="PROSITE-ProRule" id="PRU00716"/>
    </source>
</evidence>
<evidence type="ECO:0000305" key="4"/>
<gene>
    <name type="primary">mcr1</name>
    <name type="ORF">AFUA_1G04540</name>
</gene>
<protein>
    <recommendedName>
        <fullName>NADH-cytochrome b5 reductase 2</fullName>
        <ecNumber>1.6.2.2</ecNumber>
    </recommendedName>
    <alternativeName>
        <fullName>Mitochondrial cytochrome b reductase</fullName>
    </alternativeName>
</protein>
<comment type="function">
    <text evidence="1">May mediate the reduction of outer membrane cytochrome b5.</text>
</comment>
<comment type="catalytic activity">
    <reaction>
        <text>2 Fe(III)-[cytochrome b5] + NADH = 2 Fe(II)-[cytochrome b5] + NAD(+) + H(+)</text>
        <dbReference type="Rhea" id="RHEA:46680"/>
        <dbReference type="Rhea" id="RHEA-COMP:10438"/>
        <dbReference type="Rhea" id="RHEA-COMP:10439"/>
        <dbReference type="ChEBI" id="CHEBI:15378"/>
        <dbReference type="ChEBI" id="CHEBI:29033"/>
        <dbReference type="ChEBI" id="CHEBI:29034"/>
        <dbReference type="ChEBI" id="CHEBI:57540"/>
        <dbReference type="ChEBI" id="CHEBI:57945"/>
        <dbReference type="EC" id="1.6.2.2"/>
    </reaction>
</comment>
<comment type="cofactor">
    <cofactor evidence="1">
        <name>FAD</name>
        <dbReference type="ChEBI" id="CHEBI:57692"/>
    </cofactor>
</comment>
<comment type="subcellular location">
    <subcellularLocation>
        <location evidence="1">Mitochondrion outer membrane</location>
        <topology evidence="1">Single-pass membrane protein</topology>
    </subcellularLocation>
</comment>
<comment type="similarity">
    <text evidence="4">Belongs to the flavoprotein pyridine nucleotide cytochrome reductase family.</text>
</comment>
<organism>
    <name type="scientific">Aspergillus fumigatus (strain ATCC MYA-4609 / CBS 101355 / FGSC A1100 / Af293)</name>
    <name type="common">Neosartorya fumigata</name>
    <dbReference type="NCBI Taxonomy" id="330879"/>
    <lineage>
        <taxon>Eukaryota</taxon>
        <taxon>Fungi</taxon>
        <taxon>Dikarya</taxon>
        <taxon>Ascomycota</taxon>
        <taxon>Pezizomycotina</taxon>
        <taxon>Eurotiomycetes</taxon>
        <taxon>Eurotiomycetidae</taxon>
        <taxon>Eurotiales</taxon>
        <taxon>Aspergillaceae</taxon>
        <taxon>Aspergillus</taxon>
        <taxon>Aspergillus subgen. Fumigati</taxon>
    </lineage>
</organism>
<feature type="chain" id="PRO_0000330171" description="NADH-cytochrome b5 reductase 2">
    <location>
        <begin position="1"/>
        <end position="323"/>
    </location>
</feature>
<feature type="transmembrane region" description="Helical" evidence="2">
    <location>
        <begin position="32"/>
        <end position="48"/>
    </location>
</feature>
<feature type="domain" description="FAD-binding FR-type" evidence="3">
    <location>
        <begin position="72"/>
        <end position="177"/>
    </location>
</feature>
<feature type="binding site" evidence="1">
    <location>
        <begin position="180"/>
        <end position="215"/>
    </location>
    <ligand>
        <name>FAD</name>
        <dbReference type="ChEBI" id="CHEBI:57692"/>
    </ligand>
</feature>
<proteinExistence type="inferred from homology"/>
<accession>Q4WJW8</accession>